<comment type="function">
    <text evidence="3 4 6">Has a role in the initiation of DNA replication. Required at S-phase checkpoint. Required for the association of PSF1 with origins. Also required for the proper activation of RAD53 in response to DNA damage and replication blocks. Multicopy suppressor of DPB2 mutation. Overexpression restores the growth defect conferred by POL2 mutation.</text>
</comment>
<comment type="subunit">
    <text evidence="3 7">Interacts with SLD2.</text>
</comment>
<comment type="interaction">
    <interactant intactId="EBI-25984">
        <id>P47027</id>
    </interactant>
    <interactant intactId="EBI-35652">
        <id>Q04377</id>
        <label>LCD1</label>
    </interactant>
    <organismsDiffer>false</organismsDiffer>
    <experiments>7</experiments>
</comment>
<comment type="interaction">
    <interactant intactId="EBI-25984">
        <id>P47027</id>
    </interactant>
    <interactant intactId="EBI-6668">
        <id>P38111</id>
        <label>MEC1</label>
    </interactant>
    <organismsDiffer>false</organismsDiffer>
    <experiments>3</experiments>
</comment>
<comment type="interaction">
    <interactant intactId="EBI-25984">
        <id>P47027</id>
    </interactant>
    <interactant intactId="EBI-14788">
        <id>P14737</id>
        <label>RAD9</label>
    </interactant>
    <organismsDiffer>false</organismsDiffer>
    <experiments>13</experiments>
</comment>
<comment type="interaction">
    <interactant intactId="EBI-25984">
        <id>P47027</id>
    </interactant>
    <interactant intactId="EBI-26824">
        <id>P34252</id>
        <label>SLD2</label>
    </interactant>
    <organismsDiffer>false</organismsDiffer>
    <experiments>9</experiments>
</comment>
<comment type="interaction">
    <interactant intactId="EBI-25984">
        <id>P47027</id>
    </interactant>
    <interactant intactId="EBI-23925">
        <id>P53135</id>
        <label>SLD3</label>
    </interactant>
    <organismsDiffer>false</organismsDiffer>
    <experiments>9</experiments>
</comment>
<comment type="interaction">
    <interactant intactId="EBI-25984">
        <id>P47027</id>
    </interactant>
    <interactant intactId="EBI-37788">
        <id>Q12098</id>
        <label>SLX4</label>
    </interactant>
    <organismsDiffer>false</organismsDiffer>
    <experiments>2</experiments>
</comment>
<comment type="subcellular location">
    <subcellularLocation>
        <location evidence="4">Nucleus</location>
    </subcellularLocation>
</comment>
<comment type="miscellaneous">
    <text evidence="5">Present with 540 molecules/cell in log phase SD medium.</text>
</comment>
<evidence type="ECO:0000255" key="1">
    <source>
        <dbReference type="PROSITE-ProRule" id="PRU00033"/>
    </source>
</evidence>
<evidence type="ECO:0000256" key="2">
    <source>
        <dbReference type="SAM" id="MobiDB-lite"/>
    </source>
</evidence>
<evidence type="ECO:0000269" key="3">
    <source>
    </source>
</evidence>
<evidence type="ECO:0000269" key="4">
    <source>
    </source>
</evidence>
<evidence type="ECO:0000269" key="5">
    <source>
    </source>
</evidence>
<evidence type="ECO:0000269" key="6">
    <source>
    </source>
</evidence>
<evidence type="ECO:0000269" key="7">
    <source>
    </source>
</evidence>
<evidence type="ECO:0000305" key="8"/>
<name>DPB11_YEAST</name>
<accession>P47027</accession>
<accession>D6VW94</accession>
<accession>Q05712</accession>
<gene>
    <name type="primary">DPB11</name>
    <name type="ordered locus">YJL090C</name>
    <name type="ORF">J0918</name>
</gene>
<reference key="1">
    <citation type="journal article" date="1995" name="Proc. Natl. Acad. Sci. U.S.A.">
        <title>Dpb11, which interacts with DNA polymerase II(epsilon) in Saccharomyces cerevisiae, has a dual role in S-phase progression and at a cell cycle checkpoint.</title>
        <authorList>
            <person name="Araki H."/>
            <person name="Leem S.-H."/>
            <person name="Phongdara A."/>
            <person name="Sugino A."/>
        </authorList>
    </citation>
    <scope>NUCLEOTIDE SEQUENCE [GENOMIC DNA]</scope>
    <scope>FUNCTION</scope>
    <source>
        <strain>SK1</strain>
    </source>
</reference>
<reference key="2">
    <citation type="journal article" date="1995" name="Yeast">
        <title>Sequence analysis of a 33.1 kb fragment from the left arm of Saccharomyces cerevisiae chromosome X, including putative proteins with leucine zippers, a fungal Zn(II)2-Cys6 binuclear cluster domain and a putative alpha 2-SCB-alpha 2 binding site.</title>
        <authorList>
            <person name="Miosga T."/>
            <person name="Schaaff-Gerstenschlaeger I."/>
            <person name="Chalwatzis N."/>
            <person name="Baur A."/>
            <person name="Boles E."/>
            <person name="Fournier C."/>
            <person name="Schmitt S."/>
            <person name="Velten C."/>
            <person name="Wilhelm N."/>
            <person name="Zimmermann F.K."/>
        </authorList>
    </citation>
    <scope>NUCLEOTIDE SEQUENCE [GENOMIC DNA]</scope>
    <source>
        <strain>ATCC 204508 / S288c</strain>
    </source>
</reference>
<reference key="3">
    <citation type="journal article" date="1996" name="EMBO J.">
        <title>Complete nucleotide sequence of Saccharomyces cerevisiae chromosome X.</title>
        <authorList>
            <person name="Galibert F."/>
            <person name="Alexandraki D."/>
            <person name="Baur A."/>
            <person name="Boles E."/>
            <person name="Chalwatzis N."/>
            <person name="Chuat J.-C."/>
            <person name="Coster F."/>
            <person name="Cziepluch C."/>
            <person name="de Haan M."/>
            <person name="Domdey H."/>
            <person name="Durand P."/>
            <person name="Entian K.-D."/>
            <person name="Gatius M."/>
            <person name="Goffeau A."/>
            <person name="Grivell L.A."/>
            <person name="Hennemann A."/>
            <person name="Herbert C.J."/>
            <person name="Heumann K."/>
            <person name="Hilger F."/>
            <person name="Hollenberg C.P."/>
            <person name="Huang M.-E."/>
            <person name="Jacq C."/>
            <person name="Jauniaux J.-C."/>
            <person name="Katsoulou C."/>
            <person name="Kirchrath L."/>
            <person name="Kleine K."/>
            <person name="Kordes E."/>
            <person name="Koetter P."/>
            <person name="Liebl S."/>
            <person name="Louis E.J."/>
            <person name="Manus V."/>
            <person name="Mewes H.-W."/>
            <person name="Miosga T."/>
            <person name="Obermaier B."/>
            <person name="Perea J."/>
            <person name="Pohl T.M."/>
            <person name="Portetelle D."/>
            <person name="Pujol A."/>
            <person name="Purnelle B."/>
            <person name="Ramezani Rad M."/>
            <person name="Rasmussen S.W."/>
            <person name="Rose M."/>
            <person name="Rossau R."/>
            <person name="Schaaff-Gerstenschlaeger I."/>
            <person name="Smits P.H.M."/>
            <person name="Scarcez T."/>
            <person name="Soriano N."/>
            <person name="To Van D."/>
            <person name="Tzermia M."/>
            <person name="Van Broekhoven A."/>
            <person name="Vandenbol M."/>
            <person name="Wedler H."/>
            <person name="von Wettstein D."/>
            <person name="Wambutt R."/>
            <person name="Zagulski M."/>
            <person name="Zollner A."/>
            <person name="Karpfinger-Hartl L."/>
        </authorList>
    </citation>
    <scope>NUCLEOTIDE SEQUENCE [LARGE SCALE GENOMIC DNA]</scope>
    <source>
        <strain>ATCC 204508 / S288c</strain>
    </source>
</reference>
<reference key="4">
    <citation type="journal article" date="2014" name="G3 (Bethesda)">
        <title>The reference genome sequence of Saccharomyces cerevisiae: Then and now.</title>
        <authorList>
            <person name="Engel S.R."/>
            <person name="Dietrich F.S."/>
            <person name="Fisk D.G."/>
            <person name="Binkley G."/>
            <person name="Balakrishnan R."/>
            <person name="Costanzo M.C."/>
            <person name="Dwight S.S."/>
            <person name="Hitz B.C."/>
            <person name="Karra K."/>
            <person name="Nash R.S."/>
            <person name="Weng S."/>
            <person name="Wong E.D."/>
            <person name="Lloyd P."/>
            <person name="Skrzypek M.S."/>
            <person name="Miyasato S.R."/>
            <person name="Simison M."/>
            <person name="Cherry J.M."/>
        </authorList>
    </citation>
    <scope>GENOME REANNOTATION</scope>
    <source>
        <strain>ATCC 204508 / S288c</strain>
    </source>
</reference>
<reference key="5">
    <citation type="journal article" date="1999" name="Proc. Natl. Acad. Sci. U.S.A.">
        <title>DRC1, DNA replication and checkpoint protein 1, functions with DPB11 to control DNA replication and the S-phase checkpoint in Saccharomyces cerevisiae.</title>
        <authorList>
            <person name="Wang H."/>
            <person name="Elledge S.J."/>
        </authorList>
    </citation>
    <scope>FUNCTION</scope>
    <scope>INTERACTION WITH SLD2</scope>
</reference>
<reference key="6">
    <citation type="journal article" date="2003" name="Genes Dev.">
        <title>GINS, a novel multiprotein complex required for chromosomal DNA replication in budding yeast.</title>
        <authorList>
            <person name="Takayama Y."/>
            <person name="Kamimura Y."/>
            <person name="Okawa M."/>
            <person name="Muramatsu S."/>
            <person name="Sugino A."/>
            <person name="Araki H."/>
        </authorList>
    </citation>
    <scope>FUNCTION</scope>
    <scope>SUBCELLULAR LOCATION</scope>
</reference>
<reference key="7">
    <citation type="journal article" date="1998" name="Mol. Cell. Biol.">
        <title>Sld2, which interacts with Dpb11 in Saccharomyces cerevisiae, is required for chromosomal DNA replication.</title>
        <authorList>
            <person name="Kamimura Y."/>
            <person name="Masumoto H."/>
            <person name="Sugino A."/>
            <person name="Araki H."/>
        </authorList>
    </citation>
    <scope>INTERACTION WITH SLD2</scope>
</reference>
<reference key="8">
    <citation type="journal article" date="2003" name="Nature">
        <title>Global analysis of protein expression in yeast.</title>
        <authorList>
            <person name="Ghaemmaghami S."/>
            <person name="Huh W.-K."/>
            <person name="Bower K."/>
            <person name="Howson R.W."/>
            <person name="Belle A."/>
            <person name="Dephoure N."/>
            <person name="O'Shea E.K."/>
            <person name="Weissman J.S."/>
        </authorList>
    </citation>
    <scope>LEVEL OF PROTEIN EXPRESSION [LARGE SCALE ANALYSIS]</scope>
</reference>
<reference key="9">
    <citation type="journal article" date="2008" name="Mol. Cell. Proteomics">
        <title>A multidimensional chromatography technology for in-depth phosphoproteome analysis.</title>
        <authorList>
            <person name="Albuquerque C.P."/>
            <person name="Smolka M.B."/>
            <person name="Payne S.H."/>
            <person name="Bafna V."/>
            <person name="Eng J."/>
            <person name="Zhou H."/>
        </authorList>
    </citation>
    <scope>IDENTIFICATION BY MASS SPECTROMETRY [LARGE SCALE ANALYSIS]</scope>
</reference>
<keyword id="KW-0131">Cell cycle</keyword>
<keyword id="KW-0235">DNA replication</keyword>
<keyword id="KW-0539">Nucleus</keyword>
<keyword id="KW-1185">Reference proteome</keyword>
<keyword id="KW-0677">Repeat</keyword>
<feature type="chain" id="PRO_0000079989" description="DNA replication regulator DPB11">
    <location>
        <begin position="1"/>
        <end position="764"/>
    </location>
</feature>
<feature type="domain" description="BRCT 1" evidence="1">
    <location>
        <begin position="1"/>
        <end position="99"/>
    </location>
</feature>
<feature type="domain" description="BRCT 2" evidence="1">
    <location>
        <begin position="129"/>
        <end position="220"/>
    </location>
</feature>
<feature type="domain" description="BRCT 3" evidence="1">
    <location>
        <begin position="322"/>
        <end position="418"/>
    </location>
</feature>
<feature type="region of interest" description="Disordered" evidence="2">
    <location>
        <begin position="651"/>
        <end position="675"/>
    </location>
</feature>
<feature type="region of interest" description="Disordered" evidence="2">
    <location>
        <begin position="710"/>
        <end position="764"/>
    </location>
</feature>
<feature type="compositionally biased region" description="Basic and acidic residues" evidence="2">
    <location>
        <begin position="739"/>
        <end position="751"/>
    </location>
</feature>
<feature type="sequence conflict" description="In Ref. 1; BAA07725." evidence="8" ref="1">
    <original>Q</original>
    <variation>K</variation>
    <location>
        <position position="72"/>
    </location>
</feature>
<feature type="sequence conflict" description="In Ref. 1; BAA07725." evidence="8" ref="1">
    <original>QQ</original>
    <variation>HR</variation>
    <location>
        <begin position="295"/>
        <end position="296"/>
    </location>
</feature>
<feature type="sequence conflict" description="In Ref. 1; BAA07725." evidence="8" ref="1">
    <original>C</original>
    <variation>Y</variation>
    <location>
        <position position="515"/>
    </location>
</feature>
<feature type="sequence conflict" description="In Ref. 1; BAA07725." evidence="8" ref="1">
    <original>Y</original>
    <variation>C</variation>
    <location>
        <position position="603"/>
    </location>
</feature>
<feature type="sequence conflict" description="In Ref. 1; BAA07725." evidence="8" ref="1">
    <original>R</original>
    <variation>K</variation>
    <location>
        <position position="656"/>
    </location>
</feature>
<sequence>MKPFQGITFCPTAINNEILAKKISKKIIKLGGIFSKDLTRQVNVLVVGSTTNTNKFKFAVKHRFDIIFIDIQAIDDIYQLWLSGENILPDSNTATMTGSTYEMLKILYRRFSFKYLHNFNIFIGRITDTNITSIDSLVRSIKKLGCSSYNYQNFVIKDTSSHNDDDDQGQNGQISIFVTDTLLGARVNAAIEQNIPIVHFKWILDCQKRSALLPYDPYYLLPNIKDLPYDSIGSNSCDCWDKINTTFPTNIDAQSSLQRQQSSSTLTPSLPKTSSLLNKFKPKGEKIWDKAMSLQQHSKTNFSVLGQSPLSINNKQEDLSDNSTLIFKNCAFIIHHIFPGNHRSILTKIVVQNGGKIETSYLSGIYDHSYYIIPSNKALDSFNDLPEIIDDNDGIVTEFFIERCLYYQKLLHPIDLWSKPFLSTIEFQVSSSSKLLHHEFSSSPFLNVTITGFSGVELLHLTKVLNLLKPMGINYVEYLNKSTDILLINLAALPSIPKTHPLWSNEFSDLFTQFCINNNNDDPGDNNRKDFQNNSILRNSMKRKIEYIKKFHSIPVVTPAFIFKLLSAASGENNEIFLNNIKWCIICPRGHKDDFKCKIKKPYYTSISSEKKYQNNDPKIDKTILLKRNNSSLSEHSMKDTKNELLQKIRETDSGRKKRSVSSSIMDVSSERQMPDTKRIKLESLPKNFVPKQIKRTTSWGTIMSENVPTEQPTAISNPEEIPRTEEVSHTQVTYGSIQDKKRTASLEKPMRRQTRNQTKELDS</sequence>
<dbReference type="EMBL" id="D42168">
    <property type="protein sequence ID" value="BAA07725.2"/>
    <property type="molecule type" value="Genomic_DNA"/>
</dbReference>
<dbReference type="EMBL" id="X83502">
    <property type="protein sequence ID" value="CAA58477.1"/>
    <property type="molecule type" value="Genomic_DNA"/>
</dbReference>
<dbReference type="EMBL" id="Z49365">
    <property type="protein sequence ID" value="CAA89383.1"/>
    <property type="molecule type" value="Genomic_DNA"/>
</dbReference>
<dbReference type="EMBL" id="BK006943">
    <property type="protein sequence ID" value="DAA08710.1"/>
    <property type="molecule type" value="Genomic_DNA"/>
</dbReference>
<dbReference type="PIR" id="S56017">
    <property type="entry name" value="S56017"/>
</dbReference>
<dbReference type="RefSeq" id="NP_012445.1">
    <property type="nucleotide sequence ID" value="NM_001181523.1"/>
</dbReference>
<dbReference type="BioGRID" id="33667">
    <property type="interactions" value="591"/>
</dbReference>
<dbReference type="ComplexPortal" id="CPX-1188">
    <property type="entry name" value="DPB11-SLD3-SLD2 DNA replication complex"/>
</dbReference>
<dbReference type="DIP" id="DIP-5037N"/>
<dbReference type="FunCoup" id="P47027">
    <property type="interactions" value="58"/>
</dbReference>
<dbReference type="IntAct" id="P47027">
    <property type="interactions" value="17"/>
</dbReference>
<dbReference type="MINT" id="P47027"/>
<dbReference type="STRING" id="4932.YJL090C"/>
<dbReference type="iPTMnet" id="P47027"/>
<dbReference type="PaxDb" id="4932-YJL090C"/>
<dbReference type="PeptideAtlas" id="P47027"/>
<dbReference type="EnsemblFungi" id="YJL090C_mRNA">
    <property type="protein sequence ID" value="YJL090C"/>
    <property type="gene ID" value="YJL090C"/>
</dbReference>
<dbReference type="GeneID" id="853355"/>
<dbReference type="KEGG" id="sce:YJL090C"/>
<dbReference type="AGR" id="SGD:S000003626"/>
<dbReference type="SGD" id="S000003626">
    <property type="gene designation" value="DPB11"/>
</dbReference>
<dbReference type="VEuPathDB" id="FungiDB:YJL090C"/>
<dbReference type="eggNOG" id="KOG1929">
    <property type="taxonomic scope" value="Eukaryota"/>
</dbReference>
<dbReference type="HOGENOM" id="CLU_020751_0_0_1"/>
<dbReference type="InParanoid" id="P47027"/>
<dbReference type="OMA" id="ERCLHYK"/>
<dbReference type="OrthoDB" id="251770at2759"/>
<dbReference type="BioCyc" id="YEAST:G3O-31545-MONOMER"/>
<dbReference type="BioGRID-ORCS" id="853355">
    <property type="hits" value="0 hits in 10 CRISPR screens"/>
</dbReference>
<dbReference type="PRO" id="PR:P47027"/>
<dbReference type="Proteomes" id="UP000002311">
    <property type="component" value="Chromosome X"/>
</dbReference>
<dbReference type="RNAct" id="P47027">
    <property type="molecule type" value="protein"/>
</dbReference>
<dbReference type="GO" id="GO:0031261">
    <property type="term" value="C:DNA replication preinitiation complex"/>
    <property type="evidence" value="ECO:0000315"/>
    <property type="project" value="SGD"/>
</dbReference>
<dbReference type="GO" id="GO:0005634">
    <property type="term" value="C:nucleus"/>
    <property type="evidence" value="ECO:0007005"/>
    <property type="project" value="SGD"/>
</dbReference>
<dbReference type="GO" id="GO:0005657">
    <property type="term" value="C:replication fork"/>
    <property type="evidence" value="ECO:0000314"/>
    <property type="project" value="SGD"/>
</dbReference>
<dbReference type="GO" id="GO:0070182">
    <property type="term" value="F:DNA polymerase binding"/>
    <property type="evidence" value="ECO:0000314"/>
    <property type="project" value="SGD"/>
</dbReference>
<dbReference type="GO" id="GO:0030295">
    <property type="term" value="F:protein kinase activator activity"/>
    <property type="evidence" value="ECO:0000314"/>
    <property type="project" value="SGD"/>
</dbReference>
<dbReference type="GO" id="GO:0000076">
    <property type="term" value="P:DNA replication checkpoint signaling"/>
    <property type="evidence" value="ECO:0000315"/>
    <property type="project" value="SGD"/>
</dbReference>
<dbReference type="GO" id="GO:0006270">
    <property type="term" value="P:DNA replication initiation"/>
    <property type="evidence" value="ECO:0000315"/>
    <property type="project" value="SGD"/>
</dbReference>
<dbReference type="GO" id="GO:0000727">
    <property type="term" value="P:double-strand break repair via break-induced replication"/>
    <property type="evidence" value="ECO:0000315"/>
    <property type="project" value="SGD"/>
</dbReference>
<dbReference type="GO" id="GO:0007533">
    <property type="term" value="P:mating type switching"/>
    <property type="evidence" value="ECO:0000315"/>
    <property type="project" value="SGD"/>
</dbReference>
<dbReference type="GO" id="GO:0033314">
    <property type="term" value="P:mitotic DNA replication checkpoint signaling"/>
    <property type="evidence" value="ECO:0000318"/>
    <property type="project" value="GO_Central"/>
</dbReference>
<dbReference type="GO" id="GO:0007095">
    <property type="term" value="P:mitotic G2 DNA damage checkpoint signaling"/>
    <property type="evidence" value="ECO:0000316"/>
    <property type="project" value="SGD"/>
</dbReference>
<dbReference type="GO" id="GO:0000725">
    <property type="term" value="P:recombinational repair"/>
    <property type="evidence" value="ECO:0000314"/>
    <property type="project" value="SGD"/>
</dbReference>
<dbReference type="GO" id="GO:1903466">
    <property type="term" value="P:regulation of mitotic DNA replication initiation"/>
    <property type="evidence" value="ECO:0000303"/>
    <property type="project" value="ComplexPortal"/>
</dbReference>
<dbReference type="CDD" id="cd18433">
    <property type="entry name" value="BRCT_Rad4_rpt3"/>
    <property type="match status" value="1"/>
</dbReference>
<dbReference type="FunFam" id="3.40.50.10190:FF:000100">
    <property type="entry name" value="DNA polymerase II complex"/>
    <property type="match status" value="1"/>
</dbReference>
<dbReference type="Gene3D" id="3.40.50.10190">
    <property type="entry name" value="BRCT domain"/>
    <property type="match status" value="4"/>
</dbReference>
<dbReference type="InterPro" id="IPR001357">
    <property type="entry name" value="BRCT_dom"/>
</dbReference>
<dbReference type="InterPro" id="IPR036420">
    <property type="entry name" value="BRCT_dom_sf"/>
</dbReference>
<dbReference type="PANTHER" id="PTHR13561">
    <property type="entry name" value="DNA REPLICATION REGULATOR DPB11-RELATED"/>
    <property type="match status" value="1"/>
</dbReference>
<dbReference type="PANTHER" id="PTHR13561:SF20">
    <property type="entry name" value="DNA TOPOISOMERASE 2-BINDING PROTEIN 1"/>
    <property type="match status" value="1"/>
</dbReference>
<dbReference type="Pfam" id="PF00533">
    <property type="entry name" value="BRCT"/>
    <property type="match status" value="2"/>
</dbReference>
<dbReference type="Pfam" id="PF16589">
    <property type="entry name" value="BRCT_2"/>
    <property type="match status" value="1"/>
</dbReference>
<dbReference type="SMART" id="SM00292">
    <property type="entry name" value="BRCT"/>
    <property type="match status" value="3"/>
</dbReference>
<dbReference type="SUPFAM" id="SSF52113">
    <property type="entry name" value="BRCT domain"/>
    <property type="match status" value="4"/>
</dbReference>
<dbReference type="PROSITE" id="PS50172">
    <property type="entry name" value="BRCT"/>
    <property type="match status" value="3"/>
</dbReference>
<organism>
    <name type="scientific">Saccharomyces cerevisiae (strain ATCC 204508 / S288c)</name>
    <name type="common">Baker's yeast</name>
    <dbReference type="NCBI Taxonomy" id="559292"/>
    <lineage>
        <taxon>Eukaryota</taxon>
        <taxon>Fungi</taxon>
        <taxon>Dikarya</taxon>
        <taxon>Ascomycota</taxon>
        <taxon>Saccharomycotina</taxon>
        <taxon>Saccharomycetes</taxon>
        <taxon>Saccharomycetales</taxon>
        <taxon>Saccharomycetaceae</taxon>
        <taxon>Saccharomyces</taxon>
    </lineage>
</organism>
<proteinExistence type="evidence at protein level"/>
<protein>
    <recommendedName>
        <fullName>DNA replication regulator DPB11</fullName>
    </recommendedName>
</protein>